<evidence type="ECO:0000250" key="1"/>
<evidence type="ECO:0000255" key="2"/>
<evidence type="ECO:0000305" key="3"/>
<reference key="1">
    <citation type="journal article" date="2009" name="Genome Res.">
        <title>Genome structure of a Saccharomyces cerevisiae strain widely used in bioethanol production.</title>
        <authorList>
            <person name="Argueso J.L."/>
            <person name="Carazzolle M.F."/>
            <person name="Mieczkowski P.A."/>
            <person name="Duarte F.M."/>
            <person name="Netto O.V.C."/>
            <person name="Missawa S.K."/>
            <person name="Galzerani F."/>
            <person name="Costa G.G.L."/>
            <person name="Vidal R.O."/>
            <person name="Noronha M.F."/>
            <person name="Dominska M."/>
            <person name="Andrietta M.G.S."/>
            <person name="Andrietta S.R."/>
            <person name="Cunha A.F."/>
            <person name="Gomes L.H."/>
            <person name="Tavares F.C.A."/>
            <person name="Alcarde A.R."/>
            <person name="Dietrich F.S."/>
            <person name="McCusker J.H."/>
            <person name="Petes T.D."/>
            <person name="Pereira G.A.G."/>
        </authorList>
    </citation>
    <scope>NUCLEOTIDE SEQUENCE [LARGE SCALE GENOMIC DNA]</scope>
    <source>
        <strain>JAY291</strain>
    </source>
</reference>
<organism>
    <name type="scientific">Saccharomyces cerevisiae (strain JAY291)</name>
    <name type="common">Baker's yeast</name>
    <dbReference type="NCBI Taxonomy" id="574961"/>
    <lineage>
        <taxon>Eukaryota</taxon>
        <taxon>Fungi</taxon>
        <taxon>Dikarya</taxon>
        <taxon>Ascomycota</taxon>
        <taxon>Saccharomycotina</taxon>
        <taxon>Saccharomycetes</taxon>
        <taxon>Saccharomycetales</taxon>
        <taxon>Saccharomycetaceae</taxon>
        <taxon>Saccharomyces</taxon>
    </lineage>
</organism>
<dbReference type="EMBL" id="ACFL01000129">
    <property type="protein sequence ID" value="EEU06858.1"/>
    <property type="molecule type" value="Genomic_DNA"/>
</dbReference>
<dbReference type="SMR" id="C7GQS7"/>
<dbReference type="Proteomes" id="UP000008073">
    <property type="component" value="Unassembled WGS sequence"/>
</dbReference>
<dbReference type="GO" id="GO:0036503">
    <property type="term" value="P:ERAD pathway"/>
    <property type="evidence" value="ECO:0007669"/>
    <property type="project" value="TreeGrafter"/>
</dbReference>
<dbReference type="CDD" id="cd23996">
    <property type="entry name" value="LCL2-like"/>
    <property type="match status" value="1"/>
</dbReference>
<dbReference type="InterPro" id="IPR034543">
    <property type="entry name" value="LCL2"/>
</dbReference>
<dbReference type="PANTHER" id="PTHR38425">
    <property type="entry name" value="LONG CHRONOLOGICAL LIFESPAN PROTEIN 2"/>
    <property type="match status" value="1"/>
</dbReference>
<dbReference type="PANTHER" id="PTHR38425:SF1">
    <property type="entry name" value="LONG CHRONOLOGICAL LIFESPAN PROTEIN 2"/>
    <property type="match status" value="1"/>
</dbReference>
<proteinExistence type="inferred from homology"/>
<protein>
    <recommendedName>
        <fullName>Long chronological lifespan protein 2</fullName>
    </recommendedName>
</protein>
<gene>
    <name type="primary">LCL2</name>
    <name type="ORF">C1Q_02657</name>
</gene>
<comment type="function">
    <text evidence="1">Probable component of the endoplasmic reticulum-associated degradation (ERAD) pathway.</text>
</comment>
<comment type="similarity">
    <text evidence="3">Belongs to the LCL2 family.</text>
</comment>
<accession>C7GQS7</accession>
<keyword id="KW-0732">Signal</keyword>
<feature type="signal peptide" evidence="2">
    <location>
        <begin position="1"/>
        <end position="24"/>
    </location>
</feature>
<feature type="chain" id="PRO_0000408634" description="Long chronological lifespan protein 2">
    <location>
        <begin position="25"/>
        <end position="131"/>
    </location>
</feature>
<sequence length="131" mass="14922">MSQSRWSIVLIFALFIFGSTGVNAFFNFGHHQQQQQQQQQSYEDQVLNNPCDGYLCPDTLTCVAQQKDCPCPFPKSQLKCVLPDNKFVCISKPATHNEKFRAIYDDPVKGPKAKNKGFRDCGWVSDAYKNH</sequence>
<name>LCL2_YEAS2</name>